<accession>P03573</accession>
<feature type="initiator methionine" description="Removed; by host">
    <location>
        <position position="1"/>
    </location>
</feature>
<feature type="chain" id="PRO_0000144923" description="Capsid protein">
    <location>
        <begin position="2"/>
        <end position="159"/>
    </location>
</feature>
<feature type="modified residue" description="N-acetylserine; by host" evidence="1">
    <location>
        <position position="2"/>
    </location>
</feature>
<reference key="1">
    <citation type="journal article" date="1973" name="C. R. Hebd. Seances Acad. Sci., D, Sci. Nat.">
        <title>Partial protein sequence of an Aucuba strain of the tobacco mosaic virus.</title>
        <authorList>
            <person name="Rech J."/>
            <person name="Signoret A."/>
            <person name="Jauregui-Adell J."/>
        </authorList>
    </citation>
    <scope>PARTIAL PROTEIN SEQUENCE</scope>
</reference>
<organism>
    <name type="scientific">Tobacco mosaic virus (strain ER)</name>
    <name type="common">TMV</name>
    <dbReference type="NCBI Taxonomy" id="12247"/>
    <lineage>
        <taxon>Viruses</taxon>
        <taxon>Riboviria</taxon>
        <taxon>Orthornavirae</taxon>
        <taxon>Kitrinoviricota</taxon>
        <taxon>Alsuviricetes</taxon>
        <taxon>Martellivirales</taxon>
        <taxon>Virgaviridae</taxon>
        <taxon>Tobamovirus</taxon>
        <taxon>Tobacco mosaic virus</taxon>
    </lineage>
</organism>
<proteinExistence type="evidence at protein level"/>
<gene>
    <name type="primary">CP</name>
</gene>
<dbReference type="SMR" id="P03573"/>
<dbReference type="GO" id="GO:0019029">
    <property type="term" value="C:helical viral capsid"/>
    <property type="evidence" value="ECO:0007669"/>
    <property type="project" value="UniProtKB-KW"/>
</dbReference>
<dbReference type="GO" id="GO:0005198">
    <property type="term" value="F:structural molecule activity"/>
    <property type="evidence" value="ECO:0007669"/>
    <property type="project" value="InterPro"/>
</dbReference>
<dbReference type="Gene3D" id="1.20.120.70">
    <property type="entry name" value="Tobacco mosaic virus-like, coat protein"/>
    <property type="match status" value="1"/>
</dbReference>
<dbReference type="InterPro" id="IPR001337">
    <property type="entry name" value="TMV-like_coat"/>
</dbReference>
<dbReference type="InterPro" id="IPR036417">
    <property type="entry name" value="TMV-like_coat_sf"/>
</dbReference>
<dbReference type="Pfam" id="PF00721">
    <property type="entry name" value="TMV_coat"/>
    <property type="match status" value="1"/>
</dbReference>
<dbReference type="SUPFAM" id="SSF47195">
    <property type="entry name" value="TMV-like viral coat proteins"/>
    <property type="match status" value="1"/>
</dbReference>
<organismHost>
    <name type="scientific">Nicotiana tabacum</name>
    <name type="common">Common tobacco</name>
    <dbReference type="NCBI Taxonomy" id="4097"/>
</organismHost>
<protein>
    <recommendedName>
        <fullName>Capsid protein</fullName>
    </recommendedName>
    <alternativeName>
        <fullName>Coat protein</fullName>
    </alternativeName>
</protein>
<comment type="function">
    <text>Capsid protein self-assembles to form rod-shaped virions about 18 nm in diameter with a central canal enclosing the viral genomic RNA.</text>
</comment>
<comment type="subcellular location">
    <subcellularLocation>
        <location evidence="2">Virion</location>
    </subcellularLocation>
</comment>
<comment type="similarity">
    <text evidence="2">Belongs to the virgaviridae capsid protein family.</text>
</comment>
<keyword id="KW-0007">Acetylation</keyword>
<keyword id="KW-0167">Capsid protein</keyword>
<keyword id="KW-0903">Direct protein sequencing</keyword>
<keyword id="KW-1139">Helical capsid protein</keyword>
<keyword id="KW-0946">Virion</keyword>
<sequence length="159" mass="17720">MSYNITTPSQFVFLSSAWADPLELINLCTNALGNQFQTQQARTVVQRQFSEVWKPSPQVTVRFPDRDFKVYRYNAVLDPLVTALLGAFDTRNRIIEVENQANPTTAETLDATRRVDDATVAIRSAINNLIVELIRGTGSYNRSSFESSSGLVWTSGPAT</sequence>
<name>CAPSD_TMVER</name>
<evidence type="ECO:0000250" key="1"/>
<evidence type="ECO:0000305" key="2"/>